<keyword id="KW-0027">Amidation</keyword>
<keyword id="KW-0903">Direct protein sequencing</keyword>
<keyword id="KW-0372">Hormone</keyword>
<keyword id="KW-0527">Neuropeptide</keyword>
<keyword id="KW-0873">Pyrrolidone carboxylic acid</keyword>
<keyword id="KW-0964">Secreted</keyword>
<organism>
    <name type="scientific">Eurycotis floridana</name>
    <name type="common">Florida woods cockroach</name>
    <name type="synonym">Skunk roach</name>
    <dbReference type="NCBI Taxonomy" id="303877"/>
    <lineage>
        <taxon>Eukaryota</taxon>
        <taxon>Metazoa</taxon>
        <taxon>Ecdysozoa</taxon>
        <taxon>Arthropoda</taxon>
        <taxon>Hexapoda</taxon>
        <taxon>Insecta</taxon>
        <taxon>Pterygota</taxon>
        <taxon>Neoptera</taxon>
        <taxon>Polyneoptera</taxon>
        <taxon>Dictyoptera</taxon>
        <taxon>Blattodea</taxon>
        <taxon>Blattoidea</taxon>
        <taxon>Blattidae</taxon>
        <taxon>Eurycotiinae</taxon>
        <taxon>Eurycotis</taxon>
    </lineage>
</organism>
<reference evidence="5" key="1">
    <citation type="journal article" date="2009" name="BMC Evol. Biol.">
        <title>A proteomic approach for studying insect phylogeny: CAPA peptides of ancient insect taxa (Dictyoptera, Blattoptera) as a test case.</title>
        <authorList>
            <person name="Roth S."/>
            <person name="Fromm B."/>
            <person name="Gaede G."/>
            <person name="Predel R."/>
        </authorList>
    </citation>
    <scope>PROTEIN SEQUENCE</scope>
    <scope>PYROGLUTAMATE FORMATION AT GLN-1</scope>
    <scope>AMIDATION AT TRP-8</scope>
    <source>
        <tissue evidence="3">Corpora cardiaca</tissue>
    </source>
</reference>
<protein>
    <recommendedName>
        <fullName evidence="1">Hypertrehalosaemic factor</fullName>
    </recommendedName>
    <alternativeName>
        <fullName evidence="4">Adipokinetic hormone 1</fullName>
        <shortName evidence="4">EurFl-AKH-1</shortName>
    </alternativeName>
    <alternativeName>
        <fullName evidence="1">Hypertrehalosaemic neuropeptide</fullName>
    </alternativeName>
</protein>
<accession>P85634</accession>
<name>HTF_EURFL</name>
<evidence type="ECO:0000250" key="1">
    <source>
        <dbReference type="UniProtKB" id="P67790"/>
    </source>
</evidence>
<evidence type="ECO:0000255" key="2"/>
<evidence type="ECO:0000269" key="3">
    <source>
    </source>
</evidence>
<evidence type="ECO:0000303" key="4">
    <source>
    </source>
</evidence>
<evidence type="ECO:0000305" key="5"/>
<feature type="peptide" id="PRO_0000378649" description="Hypertrehalosaemic factor" evidence="3">
    <location>
        <begin position="1"/>
        <end position="8"/>
    </location>
</feature>
<feature type="modified residue" description="Pyrrolidone carboxylic acid" evidence="3">
    <location>
        <position position="1"/>
    </location>
</feature>
<feature type="modified residue" description="Tryptophan amide" evidence="3">
    <location>
        <position position="8"/>
    </location>
</feature>
<sequence>QVNFSPNW</sequence>
<dbReference type="GO" id="GO:0005576">
    <property type="term" value="C:extracellular region"/>
    <property type="evidence" value="ECO:0007669"/>
    <property type="project" value="UniProtKB-SubCell"/>
</dbReference>
<dbReference type="GO" id="GO:0005179">
    <property type="term" value="F:hormone activity"/>
    <property type="evidence" value="ECO:0007669"/>
    <property type="project" value="UniProtKB-KW"/>
</dbReference>
<dbReference type="GO" id="GO:0007218">
    <property type="term" value="P:neuropeptide signaling pathway"/>
    <property type="evidence" value="ECO:0007669"/>
    <property type="project" value="UniProtKB-KW"/>
</dbReference>
<dbReference type="InterPro" id="IPR002047">
    <property type="entry name" value="Adipokinetic_hormone_CS"/>
</dbReference>
<dbReference type="PROSITE" id="PS00256">
    <property type="entry name" value="AKH"/>
    <property type="match status" value="1"/>
</dbReference>
<proteinExistence type="evidence at protein level"/>
<comment type="function">
    <text evidence="5">Hypertrehalosaemic factors are neuropeptides that elevate the level of trehalose in the hemolymph (trehalose is the major carbohydrate in the hemolymph of insects).</text>
</comment>
<comment type="subcellular location">
    <subcellularLocation>
        <location evidence="5">Secreted</location>
    </subcellularLocation>
</comment>
<comment type="similarity">
    <text evidence="2">Belongs to the AKH/HRTH/RPCH family.</text>
</comment>